<keyword id="KW-0030">Aminoacyl-tRNA synthetase</keyword>
<keyword id="KW-0067">ATP-binding</keyword>
<keyword id="KW-0963">Cytoplasm</keyword>
<keyword id="KW-0436">Ligase</keyword>
<keyword id="KW-0479">Metal-binding</keyword>
<keyword id="KW-0547">Nucleotide-binding</keyword>
<keyword id="KW-0648">Protein biosynthesis</keyword>
<keyword id="KW-0694">RNA-binding</keyword>
<keyword id="KW-0820">tRNA-binding</keyword>
<keyword id="KW-0862">Zinc</keyword>
<sequence>MNSVNSIRSTFLDYFHLNGHKVLSSSPLVPRNDPTLMFTNAGMVQFKNVFTGLEQRPCKQATTAQKCVRVGGKHNDLDNVGYTARHHTFFEMLGNFSFSDYFKEEAIFLSWNLLTKEFCLPKDKLLVTVYHSDDVAAELWRKISNLSDEKIVRIATVDNFWAMGETGPCGPCSEIFYDHGDEIWGGPPGSANEGGDRFIEIWNLVFMQYEQVSKEERVELPHPSIDTGMGLERIAAVLQGVHDNYDIDLFRALIGASQEITGVEATGDFIASHRVISDHLRSCAFLIADGVLPSNEGRGYVLRRIMRRAMRHAHFLGVKEPLMWRLLPVLVREMGQAYPELVRAESLISETLKLEEMRFRKTLERGLGLLNEASSNLKEGDHFNGEIAFKLYDTYGFPLDLTQDALRCRGISVDVDAFDKAMQRQKTEARANWSGSGEAVTETIWFAVRDRVGATEFLGYEIEKAEGIITALICDGKVVDHISSGQKAIIVVNQTPFYGESGGQIGDSGIISSGCFVFEVHDTQKKSNGVFIHIGEVKSGQAKTFECVELTVDVVRRQKIRANHSATHLLHEALRQILGPHVTQKGSLVLPDRLRFDFSHPKSVSSEELKKIEDLANDIVLQNSEVTTHLMALDDAISEGAMALFGEKYGDEVRVVSMGNPLEPEGLKKRWSIELCGGTHVERTGDIGLIHIVSESSVAAGVRRIEALTGTAARLYFNRQDERIREISSLLKTVPADVGERVSNLLHEYNRLSQACIELRKKIILSGNTIKNNQEDITIINGISFMGRVVRNILPRDLKALVDDGKKQIGSGVVAFISVAENGKGSAVVGVTNDLTDKLNAVNLIHILSDVLGGKGGGGRPDMAQSGGPEGDKAVGALAALRASLEKI</sequence>
<dbReference type="EC" id="6.1.1.7" evidence="1"/>
<dbReference type="EMBL" id="BX897700">
    <property type="protein sequence ID" value="CAF26277.1"/>
    <property type="molecule type" value="Genomic_DNA"/>
</dbReference>
<dbReference type="RefSeq" id="WP_011179524.1">
    <property type="nucleotide sequence ID" value="NC_005955.1"/>
</dbReference>
<dbReference type="SMR" id="Q6FZF1"/>
<dbReference type="KEGG" id="bqu:BQ07940"/>
<dbReference type="eggNOG" id="COG0013">
    <property type="taxonomic scope" value="Bacteria"/>
</dbReference>
<dbReference type="HOGENOM" id="CLU_004485_1_1_5"/>
<dbReference type="OrthoDB" id="9803884at2"/>
<dbReference type="Proteomes" id="UP000000597">
    <property type="component" value="Chromosome"/>
</dbReference>
<dbReference type="GO" id="GO:0005829">
    <property type="term" value="C:cytosol"/>
    <property type="evidence" value="ECO:0007669"/>
    <property type="project" value="TreeGrafter"/>
</dbReference>
<dbReference type="GO" id="GO:0004813">
    <property type="term" value="F:alanine-tRNA ligase activity"/>
    <property type="evidence" value="ECO:0007669"/>
    <property type="project" value="UniProtKB-UniRule"/>
</dbReference>
<dbReference type="GO" id="GO:0002161">
    <property type="term" value="F:aminoacyl-tRNA deacylase activity"/>
    <property type="evidence" value="ECO:0007669"/>
    <property type="project" value="TreeGrafter"/>
</dbReference>
<dbReference type="GO" id="GO:0005524">
    <property type="term" value="F:ATP binding"/>
    <property type="evidence" value="ECO:0007669"/>
    <property type="project" value="UniProtKB-UniRule"/>
</dbReference>
<dbReference type="GO" id="GO:0000049">
    <property type="term" value="F:tRNA binding"/>
    <property type="evidence" value="ECO:0007669"/>
    <property type="project" value="UniProtKB-KW"/>
</dbReference>
<dbReference type="GO" id="GO:0008270">
    <property type="term" value="F:zinc ion binding"/>
    <property type="evidence" value="ECO:0007669"/>
    <property type="project" value="UniProtKB-UniRule"/>
</dbReference>
<dbReference type="GO" id="GO:0006419">
    <property type="term" value="P:alanyl-tRNA aminoacylation"/>
    <property type="evidence" value="ECO:0007669"/>
    <property type="project" value="UniProtKB-UniRule"/>
</dbReference>
<dbReference type="GO" id="GO:0045892">
    <property type="term" value="P:negative regulation of DNA-templated transcription"/>
    <property type="evidence" value="ECO:0007669"/>
    <property type="project" value="TreeGrafter"/>
</dbReference>
<dbReference type="CDD" id="cd00673">
    <property type="entry name" value="AlaRS_core"/>
    <property type="match status" value="1"/>
</dbReference>
<dbReference type="FunFam" id="2.40.30.130:FF:000001">
    <property type="entry name" value="Alanine--tRNA ligase"/>
    <property type="match status" value="1"/>
</dbReference>
<dbReference type="FunFam" id="3.10.310.40:FF:000001">
    <property type="entry name" value="Alanine--tRNA ligase"/>
    <property type="match status" value="1"/>
</dbReference>
<dbReference type="FunFam" id="3.30.54.20:FF:000001">
    <property type="entry name" value="Alanine--tRNA ligase"/>
    <property type="match status" value="1"/>
</dbReference>
<dbReference type="FunFam" id="3.30.930.10:FF:000004">
    <property type="entry name" value="Alanine--tRNA ligase"/>
    <property type="match status" value="1"/>
</dbReference>
<dbReference type="FunFam" id="3.30.980.10:FF:000004">
    <property type="entry name" value="Alanine--tRNA ligase, cytoplasmic"/>
    <property type="match status" value="1"/>
</dbReference>
<dbReference type="Gene3D" id="2.40.30.130">
    <property type="match status" value="1"/>
</dbReference>
<dbReference type="Gene3D" id="3.10.310.40">
    <property type="match status" value="1"/>
</dbReference>
<dbReference type="Gene3D" id="3.30.54.20">
    <property type="match status" value="1"/>
</dbReference>
<dbReference type="Gene3D" id="6.10.250.550">
    <property type="match status" value="1"/>
</dbReference>
<dbReference type="Gene3D" id="3.30.930.10">
    <property type="entry name" value="Bira Bifunctional Protein, Domain 2"/>
    <property type="match status" value="1"/>
</dbReference>
<dbReference type="Gene3D" id="3.30.980.10">
    <property type="entry name" value="Threonyl-trna Synthetase, Chain A, domain 2"/>
    <property type="match status" value="1"/>
</dbReference>
<dbReference type="HAMAP" id="MF_00036_B">
    <property type="entry name" value="Ala_tRNA_synth_B"/>
    <property type="match status" value="1"/>
</dbReference>
<dbReference type="InterPro" id="IPR045864">
    <property type="entry name" value="aa-tRNA-synth_II/BPL/LPL"/>
</dbReference>
<dbReference type="InterPro" id="IPR002318">
    <property type="entry name" value="Ala-tRNA-lgiase_IIc"/>
</dbReference>
<dbReference type="InterPro" id="IPR018162">
    <property type="entry name" value="Ala-tRNA-ligase_IIc_anticod-bd"/>
</dbReference>
<dbReference type="InterPro" id="IPR018165">
    <property type="entry name" value="Ala-tRNA-synth_IIc_core"/>
</dbReference>
<dbReference type="InterPro" id="IPR018164">
    <property type="entry name" value="Ala-tRNA-synth_IIc_N"/>
</dbReference>
<dbReference type="InterPro" id="IPR050058">
    <property type="entry name" value="Ala-tRNA_ligase"/>
</dbReference>
<dbReference type="InterPro" id="IPR023033">
    <property type="entry name" value="Ala_tRNA_ligase_euk/bac"/>
</dbReference>
<dbReference type="InterPro" id="IPR003156">
    <property type="entry name" value="DHHA1_dom"/>
</dbReference>
<dbReference type="InterPro" id="IPR018163">
    <property type="entry name" value="Thr/Ala-tRNA-synth_IIc_edit"/>
</dbReference>
<dbReference type="InterPro" id="IPR009000">
    <property type="entry name" value="Transl_B-barrel_sf"/>
</dbReference>
<dbReference type="InterPro" id="IPR012947">
    <property type="entry name" value="tRNA_SAD"/>
</dbReference>
<dbReference type="NCBIfam" id="TIGR00344">
    <property type="entry name" value="alaS"/>
    <property type="match status" value="1"/>
</dbReference>
<dbReference type="PANTHER" id="PTHR11777:SF9">
    <property type="entry name" value="ALANINE--TRNA LIGASE, CYTOPLASMIC"/>
    <property type="match status" value="1"/>
</dbReference>
<dbReference type="PANTHER" id="PTHR11777">
    <property type="entry name" value="ALANYL-TRNA SYNTHETASE"/>
    <property type="match status" value="1"/>
</dbReference>
<dbReference type="Pfam" id="PF02272">
    <property type="entry name" value="DHHA1"/>
    <property type="match status" value="1"/>
</dbReference>
<dbReference type="Pfam" id="PF01411">
    <property type="entry name" value="tRNA-synt_2c"/>
    <property type="match status" value="1"/>
</dbReference>
<dbReference type="Pfam" id="PF07973">
    <property type="entry name" value="tRNA_SAD"/>
    <property type="match status" value="1"/>
</dbReference>
<dbReference type="PRINTS" id="PR00980">
    <property type="entry name" value="TRNASYNTHALA"/>
</dbReference>
<dbReference type="SMART" id="SM00863">
    <property type="entry name" value="tRNA_SAD"/>
    <property type="match status" value="1"/>
</dbReference>
<dbReference type="SUPFAM" id="SSF55681">
    <property type="entry name" value="Class II aaRS and biotin synthetases"/>
    <property type="match status" value="1"/>
</dbReference>
<dbReference type="SUPFAM" id="SSF101353">
    <property type="entry name" value="Putative anticodon-binding domain of alanyl-tRNA synthetase (AlaRS)"/>
    <property type="match status" value="1"/>
</dbReference>
<dbReference type="SUPFAM" id="SSF55186">
    <property type="entry name" value="ThrRS/AlaRS common domain"/>
    <property type="match status" value="1"/>
</dbReference>
<dbReference type="SUPFAM" id="SSF50447">
    <property type="entry name" value="Translation proteins"/>
    <property type="match status" value="1"/>
</dbReference>
<dbReference type="PROSITE" id="PS50860">
    <property type="entry name" value="AA_TRNA_LIGASE_II_ALA"/>
    <property type="match status" value="1"/>
</dbReference>
<feature type="chain" id="PRO_0000075064" description="Alanine--tRNA ligase">
    <location>
        <begin position="1"/>
        <end position="888"/>
    </location>
</feature>
<feature type="binding site" evidence="1">
    <location>
        <position position="564"/>
    </location>
    <ligand>
        <name>Zn(2+)</name>
        <dbReference type="ChEBI" id="CHEBI:29105"/>
    </ligand>
</feature>
<feature type="binding site" evidence="1">
    <location>
        <position position="568"/>
    </location>
    <ligand>
        <name>Zn(2+)</name>
        <dbReference type="ChEBI" id="CHEBI:29105"/>
    </ligand>
</feature>
<feature type="binding site" evidence="1">
    <location>
        <position position="676"/>
    </location>
    <ligand>
        <name>Zn(2+)</name>
        <dbReference type="ChEBI" id="CHEBI:29105"/>
    </ligand>
</feature>
<feature type="binding site" evidence="1">
    <location>
        <position position="680"/>
    </location>
    <ligand>
        <name>Zn(2+)</name>
        <dbReference type="ChEBI" id="CHEBI:29105"/>
    </ligand>
</feature>
<protein>
    <recommendedName>
        <fullName evidence="1">Alanine--tRNA ligase</fullName>
        <ecNumber evidence="1">6.1.1.7</ecNumber>
    </recommendedName>
    <alternativeName>
        <fullName evidence="1">Alanyl-tRNA synthetase</fullName>
        <shortName evidence="1">AlaRS</shortName>
    </alternativeName>
</protein>
<name>SYA_BARQU</name>
<organism>
    <name type="scientific">Bartonella quintana (strain Toulouse)</name>
    <name type="common">Rochalimaea quintana</name>
    <dbReference type="NCBI Taxonomy" id="283165"/>
    <lineage>
        <taxon>Bacteria</taxon>
        <taxon>Pseudomonadati</taxon>
        <taxon>Pseudomonadota</taxon>
        <taxon>Alphaproteobacteria</taxon>
        <taxon>Hyphomicrobiales</taxon>
        <taxon>Bartonellaceae</taxon>
        <taxon>Bartonella</taxon>
    </lineage>
</organism>
<accession>Q6FZF1</accession>
<reference key="1">
    <citation type="journal article" date="2004" name="Proc. Natl. Acad. Sci. U.S.A.">
        <title>The louse-borne human pathogen Bartonella quintana is a genomic derivative of the zoonotic agent Bartonella henselae.</title>
        <authorList>
            <person name="Alsmark U.C.M."/>
            <person name="Frank A.C."/>
            <person name="Karlberg E.O."/>
            <person name="Legault B.-A."/>
            <person name="Ardell D.H."/>
            <person name="Canbaeck B."/>
            <person name="Eriksson A.-S."/>
            <person name="Naeslund A.K."/>
            <person name="Handley S.A."/>
            <person name="Huvet M."/>
            <person name="La Scola B."/>
            <person name="Holmberg M."/>
            <person name="Andersson S.G.E."/>
        </authorList>
    </citation>
    <scope>NUCLEOTIDE SEQUENCE [LARGE SCALE GENOMIC DNA]</scope>
    <source>
        <strain>Toulouse</strain>
    </source>
</reference>
<gene>
    <name evidence="1" type="primary">alaS</name>
    <name type="ordered locus">BQ07940</name>
</gene>
<evidence type="ECO:0000255" key="1">
    <source>
        <dbReference type="HAMAP-Rule" id="MF_00036"/>
    </source>
</evidence>
<comment type="function">
    <text evidence="1">Catalyzes the attachment of alanine to tRNA(Ala) in a two-step reaction: alanine is first activated by ATP to form Ala-AMP and then transferred to the acceptor end of tRNA(Ala). Also edits incorrectly charged Ser-tRNA(Ala) and Gly-tRNA(Ala) via its editing domain.</text>
</comment>
<comment type="catalytic activity">
    <reaction evidence="1">
        <text>tRNA(Ala) + L-alanine + ATP = L-alanyl-tRNA(Ala) + AMP + diphosphate</text>
        <dbReference type="Rhea" id="RHEA:12540"/>
        <dbReference type="Rhea" id="RHEA-COMP:9657"/>
        <dbReference type="Rhea" id="RHEA-COMP:9923"/>
        <dbReference type="ChEBI" id="CHEBI:30616"/>
        <dbReference type="ChEBI" id="CHEBI:33019"/>
        <dbReference type="ChEBI" id="CHEBI:57972"/>
        <dbReference type="ChEBI" id="CHEBI:78442"/>
        <dbReference type="ChEBI" id="CHEBI:78497"/>
        <dbReference type="ChEBI" id="CHEBI:456215"/>
        <dbReference type="EC" id="6.1.1.7"/>
    </reaction>
</comment>
<comment type="cofactor">
    <cofactor evidence="1">
        <name>Zn(2+)</name>
        <dbReference type="ChEBI" id="CHEBI:29105"/>
    </cofactor>
    <text evidence="1">Binds 1 zinc ion per subunit.</text>
</comment>
<comment type="subcellular location">
    <subcellularLocation>
        <location evidence="1">Cytoplasm</location>
    </subcellularLocation>
</comment>
<comment type="domain">
    <text evidence="1">Consists of three domains; the N-terminal catalytic domain, the editing domain and the C-terminal C-Ala domain. The editing domain removes incorrectly charged amino acids, while the C-Ala domain, along with tRNA(Ala), serves as a bridge to cooperatively bring together the editing and aminoacylation centers thus stimulating deacylation of misacylated tRNAs.</text>
</comment>
<comment type="similarity">
    <text evidence="1">Belongs to the class-II aminoacyl-tRNA synthetase family.</text>
</comment>
<proteinExistence type="inferred from homology"/>